<feature type="chain" id="PRO_0000046676" description="Killer cell lectin-like receptor subfamily B member 1B allele A">
    <location>
        <begin position="1"/>
        <end position="223"/>
    </location>
</feature>
<feature type="topological domain" description="Cytoplasmic" evidence="1">
    <location>
        <begin position="1"/>
        <end position="43"/>
    </location>
</feature>
<feature type="transmembrane region" description="Helical; Signal-anchor for type II membrane protein" evidence="1">
    <location>
        <begin position="44"/>
        <end position="63"/>
    </location>
</feature>
<feature type="topological domain" description="Extracellular" evidence="1">
    <location>
        <begin position="64"/>
        <end position="223"/>
    </location>
</feature>
<feature type="domain" description="C-type lectin" evidence="2">
    <location>
        <begin position="93"/>
        <end position="212"/>
    </location>
</feature>
<feature type="short sequence motif" description="ITIM motif" evidence="6">
    <location>
        <begin position="6"/>
        <end position="11"/>
    </location>
</feature>
<feature type="short sequence motif" description="LCK-binding motif" evidence="6">
    <location>
        <begin position="32"/>
        <end position="35"/>
    </location>
</feature>
<feature type="disulfide bond" evidence="2">
    <location>
        <begin position="122"/>
        <end position="210"/>
    </location>
</feature>
<feature type="disulfide bond" evidence="2">
    <location>
        <begin position="189"/>
        <end position="202"/>
    </location>
</feature>
<feature type="sequence variant" description="In strain: BALB/c." evidence="7">
    <original>D</original>
    <variation>V</variation>
    <location>
        <position position="183"/>
    </location>
</feature>
<feature type="sequence variant" description="In strain: BALB/c; loss of NK1.1 reactivity." evidence="7">
    <original>S</original>
    <variation>T</variation>
    <location>
        <position position="191"/>
    </location>
</feature>
<feature type="mutagenesis site" description="Loss of inhibition of Ca(2+) influx upon activation of natural killer cells." evidence="6">
    <original>L</original>
    <variation>S</variation>
    <location>
        <position position="6"/>
    </location>
</feature>
<feature type="mutagenesis site" description="Loss of PTPN6 binding and inhibition of Ca(2+) influx upon activation of natural killer cells." evidence="6">
    <original>Y</original>
    <variation>F</variation>
    <location>
        <position position="8"/>
    </location>
</feature>
<feature type="mutagenesis site" description="Loss of Klrb1b-mediated inhibition of natural killer cell cytotoxicity. Reduced LCK binding, loss of PTPN6 binding and loss of inhibition of Ca(2+) influx upon activation of natural killer cells." evidence="6">
    <original>C</original>
    <variation>S</variation>
    <location>
        <position position="32"/>
    </location>
</feature>
<feature type="sequence conflict" description="In Ref. 3; ABB72026." evidence="8" ref="3">
    <original>E</original>
    <variation>K</variation>
    <location>
        <position position="217"/>
    </location>
</feature>
<name>KRBBA_MOUSE</name>
<proteinExistence type="evidence at protein level"/>
<protein>
    <recommendedName>
        <fullName>Killer cell lectin-like receptor subfamily B member 1B allele A</fullName>
    </recommendedName>
    <alternativeName>
        <fullName>CD161 antigen-like family member B</fullName>
    </alternativeName>
    <alternativeName>
        <fullName>Lymphocyte antigen 55b</fullName>
        <shortName>Ly-55b</shortName>
    </alternativeName>
    <alternativeName>
        <fullName>NKR-P1 34</fullName>
    </alternativeName>
    <alternativeName>
        <fullName>Natural killer cell surface protein NKR-P1B allele SJL/BALB</fullName>
        <shortName>NKR-P1B</shortName>
    </alternativeName>
    <cdAntigenName>CD161b</cdAntigenName>
</protein>
<keyword id="KW-1015">Disulfide bond</keyword>
<keyword id="KW-0430">Lectin</keyword>
<keyword id="KW-0472">Membrane</keyword>
<keyword id="KW-0675">Receptor</keyword>
<keyword id="KW-1185">Reference proteome</keyword>
<keyword id="KW-0735">Signal-anchor</keyword>
<keyword id="KW-0812">Transmembrane</keyword>
<keyword id="KW-1133">Transmembrane helix</keyword>
<sequence>MDSTTLVYADLNLARIQEPKHDSPPSLSPDTCRCPRWHRLALKFGCAGLILLVLVVIGLCVLVLSVQKSSVQKICADVQENRTHTTDCSVNLECPQDWLSHRDKCFRVFQVSNTWEEGQADCGRKGATLLLIQDQEELRFLLDSIKEKYNSFWIGLRFTLPDMNWKWINGTTFNSDVLKITGDTENGSCASISGDKVTSESCSTDNRWICQKELNHETPSNDS</sequence>
<accession>P27812</accession>
<accession>A2RSI6</accession>
<accession>Q1WJB7</accession>
<accession>Q548H2</accession>
<accession>Q61969</accession>
<organism>
    <name type="scientific">Mus musculus</name>
    <name type="common">Mouse</name>
    <dbReference type="NCBI Taxonomy" id="10090"/>
    <lineage>
        <taxon>Eukaryota</taxon>
        <taxon>Metazoa</taxon>
        <taxon>Chordata</taxon>
        <taxon>Craniata</taxon>
        <taxon>Vertebrata</taxon>
        <taxon>Euteleostomi</taxon>
        <taxon>Mammalia</taxon>
        <taxon>Eutheria</taxon>
        <taxon>Euarchontoglires</taxon>
        <taxon>Glires</taxon>
        <taxon>Rodentia</taxon>
        <taxon>Myomorpha</taxon>
        <taxon>Muroidea</taxon>
        <taxon>Muridae</taxon>
        <taxon>Murinae</taxon>
        <taxon>Mus</taxon>
        <taxon>Mus</taxon>
    </lineage>
</organism>
<dbReference type="EMBL" id="M77677">
    <property type="protein sequence ID" value="AAA39823.1"/>
    <property type="molecule type" value="mRNA"/>
</dbReference>
<dbReference type="EMBL" id="AF354259">
    <property type="protein sequence ID" value="AAK39099.1"/>
    <property type="molecule type" value="mRNA"/>
</dbReference>
<dbReference type="EMBL" id="DQ237928">
    <property type="protein sequence ID" value="ABB72026.1"/>
    <property type="molecule type" value="mRNA"/>
</dbReference>
<dbReference type="EMBL" id="BC132126">
    <property type="protein sequence ID" value="AAI32127.1"/>
    <property type="molecule type" value="mRNA"/>
</dbReference>
<dbReference type="EMBL" id="BC132128">
    <property type="protein sequence ID" value="AAI32129.1"/>
    <property type="molecule type" value="mRNA"/>
</dbReference>
<dbReference type="EMBL" id="X64719">
    <property type="protein sequence ID" value="CAA45972.1"/>
    <property type="molecule type" value="mRNA"/>
</dbReference>
<dbReference type="EMBL" id="X64721">
    <property type="protein sequence ID" value="CAA45974.1"/>
    <property type="molecule type" value="Genomic_DNA"/>
</dbReference>
<dbReference type="PIR" id="B46467">
    <property type="entry name" value="B46467"/>
</dbReference>
<dbReference type="SMR" id="P27812"/>
<dbReference type="FunCoup" id="P27812">
    <property type="interactions" value="91"/>
</dbReference>
<dbReference type="STRING" id="10090.ENSMUSP00000145481"/>
<dbReference type="PhosphoSitePlus" id="P27812"/>
<dbReference type="ProteomicsDB" id="265025"/>
<dbReference type="UCSC" id="uc009eeq.2">
    <property type="organism name" value="mouse"/>
</dbReference>
<dbReference type="AGR" id="MGI:107539"/>
<dbReference type="MGI" id="MGI:107539">
    <property type="gene designation" value="Klrb1b"/>
</dbReference>
<dbReference type="InParanoid" id="P27812"/>
<dbReference type="PhylomeDB" id="P27812"/>
<dbReference type="ChiTaRS" id="Klrb1b">
    <property type="organism name" value="mouse"/>
</dbReference>
<dbReference type="Proteomes" id="UP000000589">
    <property type="component" value="Unplaced"/>
</dbReference>
<dbReference type="RNAct" id="P27812">
    <property type="molecule type" value="protein"/>
</dbReference>
<dbReference type="GO" id="GO:0009897">
    <property type="term" value="C:external side of plasma membrane"/>
    <property type="evidence" value="ECO:0000314"/>
    <property type="project" value="MGI"/>
</dbReference>
<dbReference type="GO" id="GO:0005886">
    <property type="term" value="C:plasma membrane"/>
    <property type="evidence" value="ECO:0000314"/>
    <property type="project" value="MGI"/>
</dbReference>
<dbReference type="GO" id="GO:0030246">
    <property type="term" value="F:carbohydrate binding"/>
    <property type="evidence" value="ECO:0007669"/>
    <property type="project" value="UniProtKB-KW"/>
</dbReference>
<dbReference type="GO" id="GO:0042802">
    <property type="term" value="F:identical protein binding"/>
    <property type="evidence" value="ECO:0000353"/>
    <property type="project" value="MGI"/>
</dbReference>
<dbReference type="GO" id="GO:0038023">
    <property type="term" value="F:signaling receptor activity"/>
    <property type="evidence" value="ECO:0000314"/>
    <property type="project" value="MGI"/>
</dbReference>
<dbReference type="GO" id="GO:0045953">
    <property type="term" value="P:negative regulation of natural killer cell mediated cytotoxicity"/>
    <property type="evidence" value="ECO:0000314"/>
    <property type="project" value="MGI"/>
</dbReference>
<dbReference type="CDD" id="cd03593">
    <property type="entry name" value="CLECT_NK_receptors_like"/>
    <property type="match status" value="1"/>
</dbReference>
<dbReference type="FunFam" id="3.10.100.10:FF:000077">
    <property type="entry name" value="Killer cell lectin-like receptor subfamily B member 1A"/>
    <property type="match status" value="1"/>
</dbReference>
<dbReference type="Gene3D" id="3.10.100.10">
    <property type="entry name" value="Mannose-Binding Protein A, subunit A"/>
    <property type="match status" value="1"/>
</dbReference>
<dbReference type="InterPro" id="IPR001304">
    <property type="entry name" value="C-type_lectin-like"/>
</dbReference>
<dbReference type="InterPro" id="IPR016186">
    <property type="entry name" value="C-type_lectin-like/link_sf"/>
</dbReference>
<dbReference type="InterPro" id="IPR016187">
    <property type="entry name" value="CTDL_fold"/>
</dbReference>
<dbReference type="InterPro" id="IPR051527">
    <property type="entry name" value="KLR_subfamily_B"/>
</dbReference>
<dbReference type="InterPro" id="IPR033992">
    <property type="entry name" value="NKR-like_CTLD"/>
</dbReference>
<dbReference type="PANTHER" id="PTHR46784">
    <property type="entry name" value="KILLER CELL LECTIN-LIKE RECEPTOR SUBFAMILY B MEMBER 1"/>
    <property type="match status" value="1"/>
</dbReference>
<dbReference type="PANTHER" id="PTHR46784:SF1">
    <property type="entry name" value="KILLER CELL LECTIN-LIKE RECEPTOR SUBFAMILY B MEMBER 1"/>
    <property type="match status" value="1"/>
</dbReference>
<dbReference type="Pfam" id="PF00059">
    <property type="entry name" value="Lectin_C"/>
    <property type="match status" value="1"/>
</dbReference>
<dbReference type="SMART" id="SM00034">
    <property type="entry name" value="CLECT"/>
    <property type="match status" value="1"/>
</dbReference>
<dbReference type="SUPFAM" id="SSF56436">
    <property type="entry name" value="C-type lectin-like"/>
    <property type="match status" value="1"/>
</dbReference>
<dbReference type="PROSITE" id="PS50041">
    <property type="entry name" value="C_TYPE_LECTIN_2"/>
    <property type="match status" value="1"/>
</dbReference>
<reference key="1">
    <citation type="journal article" date="1991" name="J. Immunol.">
        <title>Mouse NKR-P1. A family of genes selectively coexpressed in adherent lymphokine-activated killer cells.</title>
        <authorList>
            <person name="Giorda R."/>
            <person name="Trucco M."/>
        </authorList>
    </citation>
    <scope>NUCLEOTIDE SEQUENCE [MRNA]</scope>
    <source>
        <strain>C57BL/6J</strain>
        <tissue>Natural killer cell</tissue>
    </source>
</reference>
<reference key="2">
    <citation type="journal article" date="1999" name="J. Immunol.">
        <title>The NKR-P1B gene product is an inhibitory receptor on SJL/J NK cells.</title>
        <authorList>
            <person name="Kung S.K.P."/>
            <person name="Su R.-C."/>
            <person name="Shannon J."/>
            <person name="Miller R.G."/>
        </authorList>
    </citation>
    <scope>NUCLEOTIDE SEQUENCE [MRNA]</scope>
    <scope>FUNCTION</scope>
    <source>
        <strain>SJL/J</strain>
    </source>
</reference>
<reference key="3">
    <citation type="journal article" date="2006" name="J. Immunol.">
        <title>Molecular and genetic basis for strain-dependent NK1.1 alloreactivity of mouse NK cells.</title>
        <authorList>
            <person name="Carlyle J.R."/>
            <person name="Mesci A."/>
            <person name="Ljutic B."/>
            <person name="Belanger S."/>
            <person name="Tai L.-H."/>
            <person name="Rousselle E."/>
            <person name="Troke A.D."/>
            <person name="Proteau M.-F."/>
            <person name="Makrigiannis A.P."/>
        </authorList>
    </citation>
    <scope>NUCLEOTIDE SEQUENCE [MRNA]</scope>
    <scope>VARIANTS VAL-183 AND THR-191</scope>
    <source>
        <strain>BALB/cJ</strain>
        <tissue>Spleen</tissue>
    </source>
</reference>
<reference key="4">
    <citation type="journal article" date="2004" name="Genome Res.">
        <title>The status, quality, and expansion of the NIH full-length cDNA project: the Mammalian Gene Collection (MGC).</title>
        <authorList>
            <consortium name="The MGC Project Team"/>
        </authorList>
    </citation>
    <scope>NUCLEOTIDE SEQUENCE [LARGE SCALE MRNA]</scope>
    <source>
        <tissue>Brain</tissue>
    </source>
</reference>
<reference key="5">
    <citation type="journal article" date="1992" name="J. Immunol.">
        <title>Genomic structure and strain-specific expression of the natural killer cell receptor NKR-P1.</title>
        <authorList>
            <person name="Giorda R."/>
            <person name="Weisberg E.P."/>
            <person name="Ip T.K."/>
            <person name="Trucco M."/>
        </authorList>
    </citation>
    <scope>NUCLEOTIDE SEQUENCE [MRNA] OF 1-29</scope>
    <scope>NUCLEOTIDE SEQUENCE [GENOMIC DNA] OF 10-198</scope>
    <source>
        <strain>BALB/cJ</strain>
    </source>
</reference>
<reference key="6">
    <citation type="journal article" date="1999" name="J. Immunol.">
        <title>Mouse NKR-P1B, a novel NK1.1 antigen with inhibitory function.</title>
        <authorList>
            <person name="Carlyle J.R."/>
            <person name="Martin A."/>
            <person name="Mehra A."/>
            <person name="Attisano L."/>
            <person name="Tsui F.W."/>
            <person name="Zuniga-Pfluecker J.C."/>
        </authorList>
    </citation>
    <scope>FUNCTION</scope>
    <scope>INTERACTION WITH PTPN6</scope>
</reference>
<reference key="7">
    <citation type="journal article" date="2004" name="Proc. Natl. Acad. Sci. U.S.A.">
        <title>Missing self-recognition of Ocil/Clr-b by inhibitory NKR-P1 natural killer cell receptors.</title>
        <authorList>
            <person name="Carlyle J.R."/>
            <person name="Jamieson A.M."/>
            <person name="Gasser S."/>
            <person name="Clingan C.S."/>
            <person name="Arase H."/>
            <person name="Raulet D.H."/>
        </authorList>
    </citation>
    <scope>FUNCTION</scope>
    <scope>INTERACTION WITH CLEC2D</scope>
</reference>
<reference key="8">
    <citation type="journal article" date="2005" name="J. Immunol.">
        <title>Functional requirements for signaling through the stimulatory and inhibitory mouse NKR-P1 (CD161) NK cell receptors.</title>
        <authorList>
            <person name="Ljutic B."/>
            <person name="Carlyle J.R."/>
            <person name="Filipp D."/>
            <person name="Nakagawa R."/>
            <person name="Julius M."/>
            <person name="Zuniga-Pfluecker J.C."/>
        </authorList>
    </citation>
    <scope>INTERACTION WITH LCK AND PTPN6</scope>
    <scope>DOMAIN ITIM MOTIF AND LCK-BINDING MOTIF</scope>
    <scope>MUTAGENESIS OF LEU-6; TYR-8 AND CYS-32</scope>
</reference>
<gene>
    <name type="primary">Klrb1b</name>
    <name type="synonym">Ly55b</name>
    <name type="synonym">Nkrp1b</name>
</gene>
<evidence type="ECO:0000255" key="1"/>
<evidence type="ECO:0000255" key="2">
    <source>
        <dbReference type="PROSITE-ProRule" id="PRU00040"/>
    </source>
</evidence>
<evidence type="ECO:0000269" key="3">
    <source>
    </source>
</evidence>
<evidence type="ECO:0000269" key="4">
    <source>
    </source>
</evidence>
<evidence type="ECO:0000269" key="5">
    <source>
    </source>
</evidence>
<evidence type="ECO:0000269" key="6">
    <source>
    </source>
</evidence>
<evidence type="ECO:0000269" key="7">
    <source>
    </source>
</evidence>
<evidence type="ECO:0000305" key="8"/>
<comment type="function">
    <text evidence="3 4 5">Receptor for CLEC2D/OCIL. Ligand-binding contributes to inhibition of cytotoxic natural killer (NK) cells. May mediate MHC class I-independent 'missing-self' recognition of allografts, tumor cells and virus-infected cells.</text>
</comment>
<comment type="subunit">
    <text evidence="4 5 6">Homodimer; disulfide-linked. Interacts with tyrosine kinase LCK. Binds PTPN6/SHP-1 in a phosphorylation-dependent manner.</text>
</comment>
<comment type="subcellular location">
    <subcellularLocation>
        <location>Membrane</location>
        <topology>Single-pass type II membrane protein</topology>
    </subcellularLocation>
</comment>
<comment type="tissue specificity">
    <text>Expressed in NK cells and a subset of T-cells.</text>
</comment>
<comment type="domain">
    <text evidence="6">Contains 1 copy of a cytoplasmic motif that is referred to as the immunoreceptor tyrosine-based inhibitor motif (ITIM). The phosphorylated ITIM motif can bind the SH2 domain of several SH2-containing phosphatases leading to down-regulation of cell activation.</text>
</comment>
<comment type="polymorphism">
    <text>Variants Thr-191 and Ala-191 interfere with binding of the anti-NK1.1 monoclonal antibody PK136 which identifies NK cells from C57BL/6 and SJL but not BALB/c mice by binding Klrb1b and Klrb1c in an allele-dependent manner. Mutagenesis of Thr-191 to Ser-191 restores NK1.1 reactivity to Klrb1b from BALB/c mice.</text>
</comment>